<proteinExistence type="inferred from homology"/>
<accession>J7FK08</accession>
<evidence type="ECO:0000250" key="1">
    <source>
        <dbReference type="UniProtKB" id="Q50EL0"/>
    </source>
</evidence>
<evidence type="ECO:0000269" key="2">
    <source>
    </source>
</evidence>
<evidence type="ECO:0000269" key="3">
    <source>
    </source>
</evidence>
<evidence type="ECO:0000269" key="4">
    <source>
    </source>
</evidence>
<evidence type="ECO:0000303" key="5">
    <source>
    </source>
</evidence>
<evidence type="ECO:0000305" key="6"/>
<evidence type="ECO:0000305" key="7">
    <source>
    </source>
</evidence>
<evidence type="ECO:0000305" key="8">
    <source>
    </source>
</evidence>
<dbReference type="EC" id="2.5.1.-" evidence="8"/>
<dbReference type="EMBL" id="JN613321">
    <property type="protein sequence ID" value="AFO85419.1"/>
    <property type="molecule type" value="Genomic_DNA"/>
</dbReference>
<dbReference type="SMR" id="J7FK08"/>
<dbReference type="GO" id="GO:0016765">
    <property type="term" value="F:transferase activity, transferring alkyl or aryl (other than methyl) groups"/>
    <property type="evidence" value="ECO:0007669"/>
    <property type="project" value="InterPro"/>
</dbReference>
<dbReference type="GO" id="GO:0009820">
    <property type="term" value="P:alkaloid metabolic process"/>
    <property type="evidence" value="ECO:0007669"/>
    <property type="project" value="InterPro"/>
</dbReference>
<dbReference type="CDD" id="cd13929">
    <property type="entry name" value="PT-DMATS_CymD"/>
    <property type="match status" value="1"/>
</dbReference>
<dbReference type="InterPro" id="IPR033964">
    <property type="entry name" value="Aro_prenylTrfase"/>
</dbReference>
<dbReference type="InterPro" id="IPR017795">
    <property type="entry name" value="Aro_prenylTrfase_DMATS"/>
</dbReference>
<dbReference type="NCBIfam" id="TIGR03429">
    <property type="entry name" value="arom_pren_DMATS"/>
    <property type="match status" value="1"/>
</dbReference>
<dbReference type="PANTHER" id="PTHR40627:SF5">
    <property type="entry name" value="INDOLE PRENYLTRANSFERASE TDIB"/>
    <property type="match status" value="1"/>
</dbReference>
<dbReference type="PANTHER" id="PTHR40627">
    <property type="entry name" value="INDOLE PRENYLTRANSFERASE TDIB-RELATED"/>
    <property type="match status" value="1"/>
</dbReference>
<dbReference type="Pfam" id="PF11991">
    <property type="entry name" value="Trp_DMAT"/>
    <property type="match status" value="1"/>
</dbReference>
<dbReference type="SFLD" id="SFLDS00036">
    <property type="entry name" value="Aromatic_Prenyltransferase"/>
    <property type="match status" value="1"/>
</dbReference>
<name>IDTF_CLAPA</name>
<reference key="1">
    <citation type="journal article" date="2013" name="PLoS Genet.">
        <title>Plant-symbiotic fungi as chemical engineers: Multi-genome analysis of the Clavicipitaceae reveals dynamics of alkaloid loci.</title>
        <authorList>
            <person name="Schardl C.L."/>
            <person name="Young C.A."/>
            <person name="Hesse U."/>
            <person name="Amyotte S.G."/>
            <person name="Andreeva K."/>
            <person name="Calie P.J."/>
            <person name="Fleetwood D.J."/>
            <person name="Haws D.C."/>
            <person name="Moore N."/>
            <person name="Oeser B."/>
            <person name="Panaccione D.G."/>
            <person name="Schweri K.K."/>
            <person name="Voisey C.R."/>
            <person name="Farman M.L."/>
            <person name="Jaromczyk J.W."/>
            <person name="Roe B.A."/>
            <person name="O'Sullivan D.M."/>
            <person name="Scott B."/>
            <person name="Tudzynski P."/>
            <person name="An Z."/>
            <person name="Arnaoudova E.G."/>
            <person name="Bullock C.T."/>
            <person name="Charlton N.D."/>
            <person name="Chen L."/>
            <person name="Cox M."/>
            <person name="Dinkins R.D."/>
            <person name="Florea S."/>
            <person name="Glenn A.E."/>
            <person name="Gordon A."/>
            <person name="Gueldener U."/>
            <person name="Harris D.R."/>
            <person name="Hollin W."/>
            <person name="Jaromczyk J."/>
            <person name="Johnson R.D."/>
            <person name="Khan A.K."/>
            <person name="Leistner E."/>
            <person name="Leuchtmann A."/>
            <person name="Li C."/>
            <person name="Liu J."/>
            <person name="Liu J."/>
            <person name="Liu M."/>
            <person name="Mace W."/>
            <person name="Machado C."/>
            <person name="Nagabhyru P."/>
            <person name="Pan J."/>
            <person name="Schmid J."/>
            <person name="Sugawara K."/>
            <person name="Steiner U."/>
            <person name="Takach J.E."/>
            <person name="Tanaka E."/>
            <person name="Webb J.S."/>
            <person name="Wilson E.V."/>
            <person name="Wiseman J.L."/>
            <person name="Yoshida R."/>
            <person name="Zeng Z."/>
        </authorList>
    </citation>
    <scope>NUCLEOTIDE SEQUENCE [GENOMIC DNA]</scope>
    <scope>IDENTIFICATION</scope>
    <scope>FUNCTION</scope>
    <source>
        <strain>RRC-1481</strain>
    </source>
</reference>
<reference key="2">
    <citation type="journal article" date="2018" name="Appl. Microbiol. Biotechnol.">
        <title>Inactivation of the indole-diterpene biosynthetic gene cluster of Claviceps paspali by Agrobacterium-mediated gene replacement.</title>
        <authorList>
            <person name="Kozak L."/>
            <person name="Szilagyi Z."/>
            <person name="Vago B."/>
            <person name="Kakuk A."/>
            <person name="Toth L."/>
            <person name="Molnar I."/>
            <person name="Pocsi I."/>
        </authorList>
    </citation>
    <scope>FUNCTION</scope>
    <scope>DISRUPTION PHENOTYPE</scope>
    <scope>PATHWAY</scope>
</reference>
<reference key="3">
    <citation type="journal article" date="2020" name="Folia Microbiol. (Praha)">
        <title>Functional characterization of the idtF and idtP genes in the Claviceps paspali indole diterpene biosynthetic gene cluster.</title>
        <authorList>
            <person name="Kozak L."/>
            <person name="Szilagyi Z."/>
            <person name="Toth L."/>
            <person name="Pocsi I."/>
            <person name="Molnar I."/>
        </authorList>
    </citation>
    <scope>FUNCTION</scope>
    <scope>DISRUPTION PHENOTYPE</scope>
    <scope>PATHWAY</scope>
</reference>
<keyword id="KW-0808">Transferase</keyword>
<feature type="chain" id="PRO_0000451435" description="Indole diterpene prenyltransferase idtF">
    <location>
        <begin position="1"/>
        <end position="427"/>
    </location>
</feature>
<feature type="binding site" evidence="1">
    <location>
        <position position="97"/>
    </location>
    <ligand>
        <name>substrate</name>
    </ligand>
</feature>
<feature type="binding site" evidence="1">
    <location>
        <position position="195"/>
    </location>
    <ligand>
        <name>substrate</name>
    </ligand>
</feature>
<feature type="binding site" evidence="1">
    <location>
        <position position="264"/>
    </location>
    <ligand>
        <name>substrate</name>
    </ligand>
</feature>
<feature type="binding site" evidence="1">
    <location>
        <position position="266"/>
    </location>
    <ligand>
        <name>substrate</name>
    </ligand>
</feature>
<feature type="binding site" evidence="1">
    <location>
        <position position="268"/>
    </location>
    <ligand>
        <name>substrate</name>
    </ligand>
</feature>
<feature type="binding site" evidence="1">
    <location>
        <position position="352"/>
    </location>
    <ligand>
        <name>substrate</name>
    </ligand>
</feature>
<protein>
    <recommendedName>
        <fullName evidence="5">Indole diterpene prenyltransferase idtF</fullName>
        <ecNumber evidence="8">2.5.1.-</ecNumber>
    </recommendedName>
    <alternativeName>
        <fullName evidence="5">Indole-diterpene biosynthesis cluster protein F</fullName>
    </alternativeName>
</protein>
<gene>
    <name evidence="5" type="primary">idtF</name>
</gene>
<comment type="function">
    <text evidence="2 3 4 7">Indole diterpene prenyltransferase; part of the gene cluster that mediates the biosynthesis of paspalitrems, indole-diterpene (IDT) mycotoxins that are potent tremorgens in mammals (PubMed:23468653, PubMed:29457197, PubMed:32077051). The geranylgeranyl diphosphate (GGPP) synthase idtG is proposed to catalyze the first step in IDT biosynthesis via catalysis of a series of iterative condensations of isopentenyl diphosphate (IPP) with dimethylallyl diphosphate (DMAPP), geranyl diphosphate (GPP), and farnesyl diphosphate (FPP), to form GGPP (Probable). Condensation of indole-3-glycerol phosphate with GGPP by the prenyltransferase idtC then forms 3-geranylgeranylindole (3-GGI) (Probable). Epoxidation of the two terminal alkenes of the geranylgeranyl moiety by the FAD-dependent monooxygenase idtM, and cyclization by the terpene cyclase idtB then leads to the production of paspaline (Probable). The cytochrome P450 monooxygenase idtP then catalyzes oxidative elimination of the pendant methyl group at C-12 of paspaline and generates the C-10 ketone to yield 13-desoxypaxilline (PubMed:32077051). The cytochrome P450 monooxygenase idtQ may catalyze the C-13 oxidation of 13-desoxypaxilline to afford paxilline (Probable). Considering that both paspalicine and paxilline were detected in C.paspali, idtQ also catalyzes the formation of paspalinine from 13-desoxypaxilline via paspalicine as an intermediate (Probable). Finally, the alpha-prenyltransferase idtF prenylates paspalinine at the C-20 or the C-21 positions to yield paspalitrems A and C, respectively (PubMed:32077051). The hydroxylation of paspalitrem A at C-32 by a still unknown oxidase affords paspalitrem B (Probable).</text>
</comment>
<comment type="pathway">
    <text evidence="3 4">Secondary metabolite biosynthesis.</text>
</comment>
<comment type="disruption phenotype">
    <text evidence="3 4">Abolishes the production of all prenylated paspalitrems, but accumulates paspalinine and small quantities of paspaline (PubMed:32077051). Simultaneous disruption of idtB, idtC, idtF and idtG eliminates the biosynthesis of the whole spectrum of indole-diterpenes reported to be produced by C.paspali, including paspaline, paxilline, paspalinine, paspalitrem A and paspalitrem B (PubMed:29457197).</text>
</comment>
<comment type="similarity">
    <text evidence="6">Belongs to the tryptophan dimethylallyltransferase family.</text>
</comment>
<organism>
    <name type="scientific">Claviceps paspali</name>
    <name type="common">Rye ergot fungus</name>
    <dbReference type="NCBI Taxonomy" id="40601"/>
    <lineage>
        <taxon>Eukaryota</taxon>
        <taxon>Fungi</taxon>
        <taxon>Dikarya</taxon>
        <taxon>Ascomycota</taxon>
        <taxon>Pezizomycotina</taxon>
        <taxon>Sordariomycetes</taxon>
        <taxon>Hypocreomycetidae</taxon>
        <taxon>Hypocreales</taxon>
        <taxon>Clavicipitaceae</taxon>
        <taxon>Claviceps</taxon>
    </lineage>
</organism>
<sequence>MESDKNGPARQENDIAEKESDIRYWTRVVCPSVRSLLHAAGSYTAEDIEAQMRTLREVVLPDLGPRPSRAPGPSYLFQGGCPFQLSINTTSKANAVRYVWEVLGERGHTSDDPLAMQTTRDTVSRLSAKFGLSTKWSDVLLSALELTTKEAQKAVEKMPEWILEHLEKGAVVPRIKNLPFGFVAFDLKESDVSIKLYITLKAREIFTGKSAADVIFDSLRNFTPAFKPEAIDMIQNFLSGLSEKMPLEVIAIDCVDEAHLSEARVKLYCHSTSNSFNTVKKWLTIGGKVKDENTLKGLQILRSMWHLFIQKPEGIPDDELETPVNLENALKHRMYFSFELKPGQDIPQVKTYLPIWRYAPSDEQAIDNFEAAFRQCHHPWGEDGTYGRIFRNALCAPPIHGDLAYIYCEKRGVYQTIYVTPPLLEED</sequence>